<sequence>MKKLLIVTMLFTLALSAQAQWYVQGDLGASKIDITHVNSSNSPSFTQRISVGYAFDKNFRLAVDYTNYGKVTANYADVVDVSLKGKSLGLTGFYDFDLADFKPYVGVRVSTNGADVTANARYYRIEAFATETRIGIGALAGVQYKLTDNVALNTNIEYNRLASNVSDVGVKAGLRFSF</sequence>
<protein>
    <recommendedName>
        <fullName>Uncharacterized protein HI_1457</fullName>
    </recommendedName>
</protein>
<gene>
    <name type="ordered locus">HI_1457</name>
</gene>
<dbReference type="EMBL" id="L42023">
    <property type="protein sequence ID" value="AAC23104.1"/>
    <property type="molecule type" value="Genomic_DNA"/>
</dbReference>
<dbReference type="PIR" id="F64124">
    <property type="entry name" value="F64124"/>
</dbReference>
<dbReference type="RefSeq" id="NP_439608.1">
    <property type="nucleotide sequence ID" value="NC_000907.1"/>
</dbReference>
<dbReference type="SMR" id="Q57201"/>
<dbReference type="STRING" id="71421.HI_1457"/>
<dbReference type="EnsemblBacteria" id="AAC23104">
    <property type="protein sequence ID" value="AAC23104"/>
    <property type="gene ID" value="HI_1457"/>
</dbReference>
<dbReference type="KEGG" id="hin:HI_1457"/>
<dbReference type="PATRIC" id="fig|71421.8.peg.1518"/>
<dbReference type="eggNOG" id="COG3637">
    <property type="taxonomic scope" value="Bacteria"/>
</dbReference>
<dbReference type="HOGENOM" id="CLU_089285_1_0_6"/>
<dbReference type="OrthoDB" id="6648740at2"/>
<dbReference type="PhylomeDB" id="Q57201"/>
<dbReference type="BioCyc" id="HINF71421:G1GJ1-1482-MONOMER"/>
<dbReference type="Proteomes" id="UP000000579">
    <property type="component" value="Chromosome"/>
</dbReference>
<dbReference type="GO" id="GO:0009279">
    <property type="term" value="C:cell outer membrane"/>
    <property type="evidence" value="ECO:0007669"/>
    <property type="project" value="UniProtKB-ARBA"/>
</dbReference>
<dbReference type="GO" id="GO:0015288">
    <property type="term" value="F:porin activity"/>
    <property type="evidence" value="ECO:0007669"/>
    <property type="project" value="InterPro"/>
</dbReference>
<dbReference type="Gene3D" id="2.40.160.20">
    <property type="match status" value="1"/>
</dbReference>
<dbReference type="InterPro" id="IPR006315">
    <property type="entry name" value="OM_autotransptr_brl_dom"/>
</dbReference>
<dbReference type="InterPro" id="IPR011250">
    <property type="entry name" value="OMP/PagP_b-brl"/>
</dbReference>
<dbReference type="InterPro" id="IPR003394">
    <property type="entry name" value="Porin_opacity"/>
</dbReference>
<dbReference type="NCBIfam" id="TIGR01414">
    <property type="entry name" value="autotrans_barl"/>
    <property type="match status" value="1"/>
</dbReference>
<dbReference type="Pfam" id="PF02462">
    <property type="entry name" value="Opacity"/>
    <property type="match status" value="1"/>
</dbReference>
<dbReference type="SUPFAM" id="SSF56925">
    <property type="entry name" value="OMPA-like"/>
    <property type="match status" value="1"/>
</dbReference>
<evidence type="ECO:0000255" key="1"/>
<evidence type="ECO:0000305" key="2"/>
<name>Y1457_HAEIN</name>
<accession>Q57201</accession>
<accession>O05063</accession>
<comment type="similarity">
    <text evidence="2">Belongs to the opacity porin family.</text>
</comment>
<proteinExistence type="evidence at protein level"/>
<keyword id="KW-1185">Reference proteome</keyword>
<keyword id="KW-0732">Signal</keyword>
<organism>
    <name type="scientific">Haemophilus influenzae (strain ATCC 51907 / DSM 11121 / KW20 / Rd)</name>
    <dbReference type="NCBI Taxonomy" id="71421"/>
    <lineage>
        <taxon>Bacteria</taxon>
        <taxon>Pseudomonadati</taxon>
        <taxon>Pseudomonadota</taxon>
        <taxon>Gammaproteobacteria</taxon>
        <taxon>Pasteurellales</taxon>
        <taxon>Pasteurellaceae</taxon>
        <taxon>Haemophilus</taxon>
    </lineage>
</organism>
<feature type="signal peptide" evidence="1">
    <location>
        <begin position="1"/>
        <end position="19"/>
    </location>
</feature>
<feature type="chain" id="PRO_0000013971" description="Uncharacterized protein HI_1457">
    <location>
        <begin position="20"/>
        <end position="178"/>
    </location>
</feature>
<reference key="1">
    <citation type="journal article" date="1995" name="Science">
        <title>Whole-genome random sequencing and assembly of Haemophilus influenzae Rd.</title>
        <authorList>
            <person name="Fleischmann R.D."/>
            <person name="Adams M.D."/>
            <person name="White O."/>
            <person name="Clayton R.A."/>
            <person name="Kirkness E.F."/>
            <person name="Kerlavage A.R."/>
            <person name="Bult C.J."/>
            <person name="Tomb J.-F."/>
            <person name="Dougherty B.A."/>
            <person name="Merrick J.M."/>
            <person name="McKenney K."/>
            <person name="Sutton G.G."/>
            <person name="FitzHugh W."/>
            <person name="Fields C.A."/>
            <person name="Gocayne J.D."/>
            <person name="Scott J.D."/>
            <person name="Shirley R."/>
            <person name="Liu L.-I."/>
            <person name="Glodek A."/>
            <person name="Kelley J.M."/>
            <person name="Weidman J.F."/>
            <person name="Phillips C.A."/>
            <person name="Spriggs T."/>
            <person name="Hedblom E."/>
            <person name="Cotton M.D."/>
            <person name="Utterback T.R."/>
            <person name="Hanna M.C."/>
            <person name="Nguyen D.T."/>
            <person name="Saudek D.M."/>
            <person name="Brandon R.C."/>
            <person name="Fine L.D."/>
            <person name="Fritchman J.L."/>
            <person name="Fuhrmann J.L."/>
            <person name="Geoghagen N.S.M."/>
            <person name="Gnehm C.L."/>
            <person name="McDonald L.A."/>
            <person name="Small K.V."/>
            <person name="Fraser C.M."/>
            <person name="Smith H.O."/>
            <person name="Venter J.C."/>
        </authorList>
    </citation>
    <scope>NUCLEOTIDE SEQUENCE [LARGE SCALE GENOMIC DNA]</scope>
    <source>
        <strain>ATCC 51907 / DSM 11121 / KW20 / Rd</strain>
    </source>
</reference>
<reference key="2">
    <citation type="journal article" date="2000" name="Electrophoresis">
        <title>Two-dimensional map of the proteome of Haemophilus influenzae.</title>
        <authorList>
            <person name="Langen H."/>
            <person name="Takacs B."/>
            <person name="Evers S."/>
            <person name="Berndt P."/>
            <person name="Lahm H.W."/>
            <person name="Wipf B."/>
            <person name="Gray C."/>
            <person name="Fountoulakis M."/>
        </authorList>
    </citation>
    <scope>IDENTIFICATION BY MASS SPECTROMETRY</scope>
    <source>
        <strain>ATCC 51907 / DSM 11121 / KW20 / Rd</strain>
    </source>
</reference>